<proteinExistence type="inferred from homology"/>
<keyword id="KW-0067">ATP-binding</keyword>
<keyword id="KW-1003">Cell membrane</keyword>
<keyword id="KW-0472">Membrane</keyword>
<keyword id="KW-0547">Nucleotide-binding</keyword>
<keyword id="KW-1278">Translocase</keyword>
<keyword id="KW-0813">Transport</keyword>
<dbReference type="EC" id="7.6.2.-"/>
<dbReference type="EMBL" id="AJ938182">
    <property type="protein sequence ID" value="CAI81927.1"/>
    <property type="molecule type" value="Genomic_DNA"/>
</dbReference>
<dbReference type="RefSeq" id="WP_001229913.1">
    <property type="nucleotide sequence ID" value="NC_007622.1"/>
</dbReference>
<dbReference type="SMR" id="Q2YZ26"/>
<dbReference type="KEGG" id="sab:SAB2238c"/>
<dbReference type="HOGENOM" id="CLU_000604_1_22_9"/>
<dbReference type="GO" id="GO:0005886">
    <property type="term" value="C:plasma membrane"/>
    <property type="evidence" value="ECO:0007669"/>
    <property type="project" value="UniProtKB-SubCell"/>
</dbReference>
<dbReference type="GO" id="GO:0005524">
    <property type="term" value="F:ATP binding"/>
    <property type="evidence" value="ECO:0007669"/>
    <property type="project" value="UniProtKB-KW"/>
</dbReference>
<dbReference type="GO" id="GO:0016887">
    <property type="term" value="F:ATP hydrolysis activity"/>
    <property type="evidence" value="ECO:0007669"/>
    <property type="project" value="InterPro"/>
</dbReference>
<dbReference type="GO" id="GO:0022857">
    <property type="term" value="F:transmembrane transporter activity"/>
    <property type="evidence" value="ECO:0007669"/>
    <property type="project" value="TreeGrafter"/>
</dbReference>
<dbReference type="CDD" id="cd03255">
    <property type="entry name" value="ABC_MJ0796_LolCDE_FtsE"/>
    <property type="match status" value="1"/>
</dbReference>
<dbReference type="FunFam" id="3.40.50.300:FF:000032">
    <property type="entry name" value="Export ABC transporter ATP-binding protein"/>
    <property type="match status" value="1"/>
</dbReference>
<dbReference type="Gene3D" id="3.40.50.300">
    <property type="entry name" value="P-loop containing nucleotide triphosphate hydrolases"/>
    <property type="match status" value="1"/>
</dbReference>
<dbReference type="InterPro" id="IPR003593">
    <property type="entry name" value="AAA+_ATPase"/>
</dbReference>
<dbReference type="InterPro" id="IPR003439">
    <property type="entry name" value="ABC_transporter-like_ATP-bd"/>
</dbReference>
<dbReference type="InterPro" id="IPR015854">
    <property type="entry name" value="ABC_transpr_LolD-like"/>
</dbReference>
<dbReference type="InterPro" id="IPR017911">
    <property type="entry name" value="MacB-like_ATP-bd"/>
</dbReference>
<dbReference type="InterPro" id="IPR027417">
    <property type="entry name" value="P-loop_NTPase"/>
</dbReference>
<dbReference type="PANTHER" id="PTHR24220:SF666">
    <property type="entry name" value="HEMIN IMPORT ATP-BINDING PROTEIN HRTA-RELATED"/>
    <property type="match status" value="1"/>
</dbReference>
<dbReference type="PANTHER" id="PTHR24220">
    <property type="entry name" value="IMPORT ATP-BINDING PROTEIN"/>
    <property type="match status" value="1"/>
</dbReference>
<dbReference type="Pfam" id="PF00005">
    <property type="entry name" value="ABC_tran"/>
    <property type="match status" value="1"/>
</dbReference>
<dbReference type="SMART" id="SM00382">
    <property type="entry name" value="AAA"/>
    <property type="match status" value="1"/>
</dbReference>
<dbReference type="SUPFAM" id="SSF52540">
    <property type="entry name" value="P-loop containing nucleoside triphosphate hydrolases"/>
    <property type="match status" value="1"/>
</dbReference>
<dbReference type="PROSITE" id="PS50893">
    <property type="entry name" value="ABC_TRANSPORTER_2"/>
    <property type="match status" value="1"/>
</dbReference>
<evidence type="ECO:0000250" key="1"/>
<evidence type="ECO:0000255" key="2">
    <source>
        <dbReference type="PROSITE-ProRule" id="PRU00434"/>
    </source>
</evidence>
<evidence type="ECO:0000305" key="3"/>
<sequence length="221" mass="24683">MALVVEDIVKNFGEGLSETKVLKGINFEVEQGEFVILNGASGSGKTTLLTILGGLLSQTSGTVLYNDTPLFDKQHRPSDLRLEDIGFIFQSSHLVPYLKVIEQLTLVGQEAGMTKQQSSKRAIQLLKNIGLEDRLNVYPHQLSGGEKQRVAIMRAFMNNPKIILADEPTASLDADRATKVVEMIRQQIKEQQMIGIMITHDRRLFEYADRVIELEDGKITD</sequence>
<feature type="chain" id="PRO_0000270128" description="Putative hemin import ATP-binding protein HrtA">
    <location>
        <begin position="1"/>
        <end position="221"/>
    </location>
</feature>
<feature type="domain" description="ABC transporter" evidence="2">
    <location>
        <begin position="3"/>
        <end position="221"/>
    </location>
</feature>
<feature type="binding site" evidence="2">
    <location>
        <begin position="39"/>
        <end position="46"/>
    </location>
    <ligand>
        <name>ATP</name>
        <dbReference type="ChEBI" id="CHEBI:30616"/>
    </ligand>
</feature>
<name>HRTA_STAAB</name>
<reference key="1">
    <citation type="journal article" date="2007" name="PLoS ONE">
        <title>Molecular correlates of host specialization in Staphylococcus aureus.</title>
        <authorList>
            <person name="Herron-Olson L."/>
            <person name="Fitzgerald J.R."/>
            <person name="Musser J.M."/>
            <person name="Kapur V."/>
        </authorList>
    </citation>
    <scope>NUCLEOTIDE SEQUENCE [LARGE SCALE GENOMIC DNA]</scope>
    <source>
        <strain>bovine RF122 / ET3-1</strain>
    </source>
</reference>
<comment type="function">
    <text evidence="1">Part of the ABC transporter complex hrt involved in hemin import. Responsible for energy coupling to the transport system (By similarity).</text>
</comment>
<comment type="subunit">
    <text evidence="1">The complex is composed of two ATP-binding proteins (HrtA), two transmembrane proteins (HrtB) and a solute-binding protein.</text>
</comment>
<comment type="subcellular location">
    <subcellularLocation>
        <location evidence="3">Cell membrane</location>
        <topology evidence="3">Peripheral membrane protein</topology>
    </subcellularLocation>
</comment>
<comment type="similarity">
    <text evidence="3">Belongs to the ABC transporter superfamily. HrtA family.</text>
</comment>
<organism>
    <name type="scientific">Staphylococcus aureus (strain bovine RF122 / ET3-1)</name>
    <dbReference type="NCBI Taxonomy" id="273036"/>
    <lineage>
        <taxon>Bacteria</taxon>
        <taxon>Bacillati</taxon>
        <taxon>Bacillota</taxon>
        <taxon>Bacilli</taxon>
        <taxon>Bacillales</taxon>
        <taxon>Staphylococcaceae</taxon>
        <taxon>Staphylococcus</taxon>
    </lineage>
</organism>
<gene>
    <name type="primary">hrtA</name>
    <name type="ordered locus">SAB2238c</name>
</gene>
<accession>Q2YZ26</accession>
<protein>
    <recommendedName>
        <fullName>Putative hemin import ATP-binding protein HrtA</fullName>
        <ecNumber>7.6.2.-</ecNumber>
    </recommendedName>
</protein>